<reference key="1">
    <citation type="journal article" date="2003" name="Science">
        <title>Role of mobile DNA in the evolution of vancomycin-resistant Enterococcus faecalis.</title>
        <authorList>
            <person name="Paulsen I.T."/>
            <person name="Banerjei L."/>
            <person name="Myers G.S.A."/>
            <person name="Nelson K.E."/>
            <person name="Seshadri R."/>
            <person name="Read T.D."/>
            <person name="Fouts D.E."/>
            <person name="Eisen J.A."/>
            <person name="Gill S.R."/>
            <person name="Heidelberg J.F."/>
            <person name="Tettelin H."/>
            <person name="Dodson R.J."/>
            <person name="Umayam L.A."/>
            <person name="Brinkac L.M."/>
            <person name="Beanan M.J."/>
            <person name="Daugherty S.C."/>
            <person name="DeBoy R.T."/>
            <person name="Durkin S.A."/>
            <person name="Kolonay J.F."/>
            <person name="Madupu R."/>
            <person name="Nelson W.C."/>
            <person name="Vamathevan J.J."/>
            <person name="Tran B."/>
            <person name="Upton J."/>
            <person name="Hansen T."/>
            <person name="Shetty J."/>
            <person name="Khouri H.M."/>
            <person name="Utterback T.R."/>
            <person name="Radune D."/>
            <person name="Ketchum K.A."/>
            <person name="Dougherty B.A."/>
            <person name="Fraser C.M."/>
        </authorList>
    </citation>
    <scope>NUCLEOTIDE SEQUENCE [LARGE SCALE GENOMIC DNA]</scope>
    <source>
        <strain>ATCC 700802 / V583</strain>
    </source>
</reference>
<comment type="function">
    <text evidence="1">Catalyzes the interconversion of 2-phosphoglycerate and 3-phosphoglycerate.</text>
</comment>
<comment type="catalytic activity">
    <reaction evidence="1">
        <text>(2R)-2-phosphoglycerate = (2R)-3-phosphoglycerate</text>
        <dbReference type="Rhea" id="RHEA:15901"/>
        <dbReference type="ChEBI" id="CHEBI:58272"/>
        <dbReference type="ChEBI" id="CHEBI:58289"/>
        <dbReference type="EC" id="5.4.2.11"/>
    </reaction>
</comment>
<comment type="pathway">
    <text evidence="1">Carbohydrate degradation; glycolysis; pyruvate from D-glyceraldehyde 3-phosphate: step 3/5.</text>
</comment>
<comment type="similarity">
    <text evidence="1">Belongs to the phosphoglycerate mutase family. BPG-dependent PGAM subfamily.</text>
</comment>
<feature type="chain" id="PRO_0000179876" description="2,3-bisphosphoglycerate-dependent phosphoglycerate mutase">
    <location>
        <begin position="1"/>
        <end position="228"/>
    </location>
</feature>
<feature type="active site" description="Tele-phosphohistidine intermediate" evidence="1">
    <location>
        <position position="9"/>
    </location>
</feature>
<feature type="active site" description="Proton donor/acceptor" evidence="1">
    <location>
        <position position="87"/>
    </location>
</feature>
<feature type="binding site" evidence="1">
    <location>
        <begin position="8"/>
        <end position="15"/>
    </location>
    <ligand>
        <name>substrate</name>
    </ligand>
</feature>
<feature type="binding site" evidence="1">
    <location>
        <begin position="21"/>
        <end position="22"/>
    </location>
    <ligand>
        <name>substrate</name>
    </ligand>
</feature>
<feature type="binding site" evidence="1">
    <location>
        <position position="60"/>
    </location>
    <ligand>
        <name>substrate</name>
    </ligand>
</feature>
<feature type="binding site" evidence="1">
    <location>
        <begin position="87"/>
        <end position="90"/>
    </location>
    <ligand>
        <name>substrate</name>
    </ligand>
</feature>
<feature type="binding site" evidence="1">
    <location>
        <position position="98"/>
    </location>
    <ligand>
        <name>substrate</name>
    </ligand>
</feature>
<feature type="binding site" evidence="1">
    <location>
        <begin position="114"/>
        <end position="115"/>
    </location>
    <ligand>
        <name>substrate</name>
    </ligand>
</feature>
<feature type="binding site" evidence="1">
    <location>
        <begin position="183"/>
        <end position="184"/>
    </location>
    <ligand>
        <name>substrate</name>
    </ligand>
</feature>
<feature type="site" description="Transition state stabilizer" evidence="1">
    <location>
        <position position="182"/>
    </location>
</feature>
<keyword id="KW-0312">Gluconeogenesis</keyword>
<keyword id="KW-0324">Glycolysis</keyword>
<keyword id="KW-0413">Isomerase</keyword>
<keyword id="KW-1185">Reference proteome</keyword>
<protein>
    <recommendedName>
        <fullName evidence="1">2,3-bisphosphoglycerate-dependent phosphoglycerate mutase</fullName>
        <shortName evidence="1">BPG-dependent PGAM</shortName>
        <shortName evidence="1">PGAM</shortName>
        <shortName evidence="1">Phosphoglyceromutase</shortName>
        <shortName evidence="1">dPGM</shortName>
        <ecNumber evidence="1">5.4.2.11</ecNumber>
    </recommendedName>
</protein>
<organism>
    <name type="scientific">Enterococcus faecalis (strain ATCC 700802 / V583)</name>
    <dbReference type="NCBI Taxonomy" id="226185"/>
    <lineage>
        <taxon>Bacteria</taxon>
        <taxon>Bacillati</taxon>
        <taxon>Bacillota</taxon>
        <taxon>Bacilli</taxon>
        <taxon>Lactobacillales</taxon>
        <taxon>Enterococcaceae</taxon>
        <taxon>Enterococcus</taxon>
    </lineage>
</organism>
<accession>Q839H4</accession>
<proteinExistence type="inferred from homology"/>
<evidence type="ECO:0000255" key="1">
    <source>
        <dbReference type="HAMAP-Rule" id="MF_01039"/>
    </source>
</evidence>
<dbReference type="EC" id="5.4.2.11" evidence="1"/>
<dbReference type="EMBL" id="AE016830">
    <property type="protein sequence ID" value="AAO80065.1"/>
    <property type="molecule type" value="Genomic_DNA"/>
</dbReference>
<dbReference type="RefSeq" id="NP_813994.1">
    <property type="nucleotide sequence ID" value="NC_004668.1"/>
</dbReference>
<dbReference type="RefSeq" id="WP_002359343.1">
    <property type="nucleotide sequence ID" value="NZ_KE136524.1"/>
</dbReference>
<dbReference type="SMR" id="Q839H4"/>
<dbReference type="STRING" id="226185.EF_0195"/>
<dbReference type="EnsemblBacteria" id="AAO80065">
    <property type="protein sequence ID" value="AAO80065"/>
    <property type="gene ID" value="EF_0195"/>
</dbReference>
<dbReference type="GeneID" id="60892691"/>
<dbReference type="KEGG" id="efa:EF0195"/>
<dbReference type="PATRIC" id="fig|226185.45.peg.71"/>
<dbReference type="eggNOG" id="COG0588">
    <property type="taxonomic scope" value="Bacteria"/>
</dbReference>
<dbReference type="HOGENOM" id="CLU_033323_1_5_9"/>
<dbReference type="UniPathway" id="UPA00109">
    <property type="reaction ID" value="UER00186"/>
</dbReference>
<dbReference type="Proteomes" id="UP000001415">
    <property type="component" value="Chromosome"/>
</dbReference>
<dbReference type="GO" id="GO:0004619">
    <property type="term" value="F:phosphoglycerate mutase activity"/>
    <property type="evidence" value="ECO:0007669"/>
    <property type="project" value="UniProtKB-EC"/>
</dbReference>
<dbReference type="GO" id="GO:0006094">
    <property type="term" value="P:gluconeogenesis"/>
    <property type="evidence" value="ECO:0007669"/>
    <property type="project" value="UniProtKB-UniRule"/>
</dbReference>
<dbReference type="GO" id="GO:0006096">
    <property type="term" value="P:glycolytic process"/>
    <property type="evidence" value="ECO:0007669"/>
    <property type="project" value="UniProtKB-UniRule"/>
</dbReference>
<dbReference type="CDD" id="cd07067">
    <property type="entry name" value="HP_PGM_like"/>
    <property type="match status" value="1"/>
</dbReference>
<dbReference type="FunFam" id="3.40.50.1240:FF:000003">
    <property type="entry name" value="2,3-bisphosphoglycerate-dependent phosphoglycerate mutase"/>
    <property type="match status" value="1"/>
</dbReference>
<dbReference type="Gene3D" id="3.40.50.1240">
    <property type="entry name" value="Phosphoglycerate mutase-like"/>
    <property type="match status" value="1"/>
</dbReference>
<dbReference type="HAMAP" id="MF_01039">
    <property type="entry name" value="PGAM_GpmA"/>
    <property type="match status" value="1"/>
</dbReference>
<dbReference type="InterPro" id="IPR013078">
    <property type="entry name" value="His_Pase_superF_clade-1"/>
</dbReference>
<dbReference type="InterPro" id="IPR029033">
    <property type="entry name" value="His_PPase_superfam"/>
</dbReference>
<dbReference type="InterPro" id="IPR005952">
    <property type="entry name" value="Phosphogly_mut1"/>
</dbReference>
<dbReference type="NCBIfam" id="TIGR01258">
    <property type="entry name" value="pgm_1"/>
    <property type="match status" value="1"/>
</dbReference>
<dbReference type="NCBIfam" id="NF010713">
    <property type="entry name" value="PRK14115.1"/>
    <property type="match status" value="1"/>
</dbReference>
<dbReference type="PANTHER" id="PTHR11931">
    <property type="entry name" value="PHOSPHOGLYCERATE MUTASE"/>
    <property type="match status" value="1"/>
</dbReference>
<dbReference type="Pfam" id="PF00300">
    <property type="entry name" value="His_Phos_1"/>
    <property type="match status" value="2"/>
</dbReference>
<dbReference type="PIRSF" id="PIRSF000709">
    <property type="entry name" value="6PFK_2-Ptase"/>
    <property type="match status" value="1"/>
</dbReference>
<dbReference type="SMART" id="SM00855">
    <property type="entry name" value="PGAM"/>
    <property type="match status" value="1"/>
</dbReference>
<dbReference type="SUPFAM" id="SSF53254">
    <property type="entry name" value="Phosphoglycerate mutase-like"/>
    <property type="match status" value="1"/>
</dbReference>
<gene>
    <name evidence="1" type="primary">gpmA</name>
    <name type="synonym">gpm</name>
    <name type="ordered locus">EF_0195</name>
</gene>
<name>GPMA_ENTFA</name>
<sequence length="228" mass="26007">MPKLVFSRHGLSEWNALNQFTGWADVDLAPEGVEEAKEGGRKIKEAGIEFDVAYTSVLTRAIKTCNYLLEYSDQLWVPQIKSWRLNERHYGKLQGLNKKETAEKYGDEQVHIWRRSYDTLPPLMEATDEGSAANDRRYAMLDQRDIPGGENLKVTLERALPFWQDEIAPALKDNKTVLVAAHGNSLRALAKHIEGISDEDIMDLEIPTGKPLVYELNDDLTVKEKYYL</sequence>